<evidence type="ECO:0000255" key="1">
    <source>
        <dbReference type="HAMAP-Rule" id="MF_01643"/>
    </source>
</evidence>
<keyword id="KW-0067">ATP-binding</keyword>
<keyword id="KW-0436">Ligase</keyword>
<keyword id="KW-0460">Magnesium</keyword>
<keyword id="KW-0479">Metal-binding</keyword>
<keyword id="KW-0547">Nucleotide-binding</keyword>
<keyword id="KW-0658">Purine biosynthesis</keyword>
<gene>
    <name evidence="1" type="primary">purT</name>
    <name type="ordered locus">YPK_2447</name>
</gene>
<reference key="1">
    <citation type="submission" date="2008-02" db="EMBL/GenBank/DDBJ databases">
        <title>Complete sequence of Yersinia pseudotuberculosis YPIII.</title>
        <authorList>
            <consortium name="US DOE Joint Genome Institute"/>
            <person name="Copeland A."/>
            <person name="Lucas S."/>
            <person name="Lapidus A."/>
            <person name="Glavina del Rio T."/>
            <person name="Dalin E."/>
            <person name="Tice H."/>
            <person name="Bruce D."/>
            <person name="Goodwin L."/>
            <person name="Pitluck S."/>
            <person name="Munk A.C."/>
            <person name="Brettin T."/>
            <person name="Detter J.C."/>
            <person name="Han C."/>
            <person name="Tapia R."/>
            <person name="Schmutz J."/>
            <person name="Larimer F."/>
            <person name="Land M."/>
            <person name="Hauser L."/>
            <person name="Challacombe J.F."/>
            <person name="Green L."/>
            <person name="Lindler L.E."/>
            <person name="Nikolich M.P."/>
            <person name="Richardson P."/>
        </authorList>
    </citation>
    <scope>NUCLEOTIDE SEQUENCE [LARGE SCALE GENOMIC DNA]</scope>
    <source>
        <strain>YPIII</strain>
    </source>
</reference>
<comment type="function">
    <text evidence="1">Involved in the de novo purine biosynthesis. Catalyzes the transfer of formate to 5-phospho-ribosyl-glycinamide (GAR), producing 5-phospho-ribosyl-N-formylglycinamide (FGAR). Formate is provided by PurU via hydrolysis of 10-formyl-tetrahydrofolate.</text>
</comment>
<comment type="catalytic activity">
    <reaction evidence="1">
        <text>N(1)-(5-phospho-beta-D-ribosyl)glycinamide + formate + ATP = N(2)-formyl-N(1)-(5-phospho-beta-D-ribosyl)glycinamide + ADP + phosphate + H(+)</text>
        <dbReference type="Rhea" id="RHEA:24829"/>
        <dbReference type="ChEBI" id="CHEBI:15378"/>
        <dbReference type="ChEBI" id="CHEBI:15740"/>
        <dbReference type="ChEBI" id="CHEBI:30616"/>
        <dbReference type="ChEBI" id="CHEBI:43474"/>
        <dbReference type="ChEBI" id="CHEBI:143788"/>
        <dbReference type="ChEBI" id="CHEBI:147286"/>
        <dbReference type="ChEBI" id="CHEBI:456216"/>
        <dbReference type="EC" id="6.3.1.21"/>
    </reaction>
    <physiologicalReaction direction="left-to-right" evidence="1">
        <dbReference type="Rhea" id="RHEA:24830"/>
    </physiologicalReaction>
</comment>
<comment type="pathway">
    <text evidence="1">Purine metabolism; IMP biosynthesis via de novo pathway; N(2)-formyl-N(1)-(5-phospho-D-ribosyl)glycinamide from N(1)-(5-phospho-D-ribosyl)glycinamide (formate route): step 1/1.</text>
</comment>
<comment type="subunit">
    <text evidence="1">Homodimer.</text>
</comment>
<comment type="similarity">
    <text evidence="1">Belongs to the PurK/PurT family.</text>
</comment>
<organism>
    <name type="scientific">Yersinia pseudotuberculosis serotype O:3 (strain YPIII)</name>
    <dbReference type="NCBI Taxonomy" id="502800"/>
    <lineage>
        <taxon>Bacteria</taxon>
        <taxon>Pseudomonadati</taxon>
        <taxon>Pseudomonadota</taxon>
        <taxon>Gammaproteobacteria</taxon>
        <taxon>Enterobacterales</taxon>
        <taxon>Yersiniaceae</taxon>
        <taxon>Yersinia</taxon>
    </lineage>
</organism>
<dbReference type="EC" id="6.3.1.21" evidence="1"/>
<dbReference type="EMBL" id="CP000950">
    <property type="protein sequence ID" value="ACA68724.1"/>
    <property type="molecule type" value="Genomic_DNA"/>
</dbReference>
<dbReference type="RefSeq" id="WP_002211083.1">
    <property type="nucleotide sequence ID" value="NZ_CP009792.1"/>
</dbReference>
<dbReference type="SMR" id="B1JP38"/>
<dbReference type="GeneID" id="57976805"/>
<dbReference type="KEGG" id="ypy:YPK_2447"/>
<dbReference type="PATRIC" id="fig|502800.11.peg.3135"/>
<dbReference type="UniPathway" id="UPA00074">
    <property type="reaction ID" value="UER00127"/>
</dbReference>
<dbReference type="GO" id="GO:0005829">
    <property type="term" value="C:cytosol"/>
    <property type="evidence" value="ECO:0007669"/>
    <property type="project" value="TreeGrafter"/>
</dbReference>
<dbReference type="GO" id="GO:0005524">
    <property type="term" value="F:ATP binding"/>
    <property type="evidence" value="ECO:0007669"/>
    <property type="project" value="UniProtKB-UniRule"/>
</dbReference>
<dbReference type="GO" id="GO:0000287">
    <property type="term" value="F:magnesium ion binding"/>
    <property type="evidence" value="ECO:0007669"/>
    <property type="project" value="InterPro"/>
</dbReference>
<dbReference type="GO" id="GO:0043815">
    <property type="term" value="F:phosphoribosylglycinamide formyltransferase 2 activity"/>
    <property type="evidence" value="ECO:0007669"/>
    <property type="project" value="UniProtKB-UniRule"/>
</dbReference>
<dbReference type="GO" id="GO:0004644">
    <property type="term" value="F:phosphoribosylglycinamide formyltransferase activity"/>
    <property type="evidence" value="ECO:0007669"/>
    <property type="project" value="InterPro"/>
</dbReference>
<dbReference type="GO" id="GO:0006189">
    <property type="term" value="P:'de novo' IMP biosynthetic process"/>
    <property type="evidence" value="ECO:0007669"/>
    <property type="project" value="UniProtKB-UniRule"/>
</dbReference>
<dbReference type="FunFam" id="3.30.1490.20:FF:000013">
    <property type="entry name" value="Formate-dependent phosphoribosylglycinamide formyltransferase"/>
    <property type="match status" value="1"/>
</dbReference>
<dbReference type="FunFam" id="3.30.470.20:FF:000027">
    <property type="entry name" value="Formate-dependent phosphoribosylglycinamide formyltransferase"/>
    <property type="match status" value="1"/>
</dbReference>
<dbReference type="FunFam" id="3.40.50.20:FF:000007">
    <property type="entry name" value="Formate-dependent phosphoribosylglycinamide formyltransferase"/>
    <property type="match status" value="1"/>
</dbReference>
<dbReference type="Gene3D" id="3.40.50.20">
    <property type="match status" value="1"/>
</dbReference>
<dbReference type="Gene3D" id="3.30.1490.20">
    <property type="entry name" value="ATP-grasp fold, A domain"/>
    <property type="match status" value="1"/>
</dbReference>
<dbReference type="Gene3D" id="3.30.470.20">
    <property type="entry name" value="ATP-grasp fold, B domain"/>
    <property type="match status" value="1"/>
</dbReference>
<dbReference type="HAMAP" id="MF_01643">
    <property type="entry name" value="PurT"/>
    <property type="match status" value="1"/>
</dbReference>
<dbReference type="InterPro" id="IPR011761">
    <property type="entry name" value="ATP-grasp"/>
</dbReference>
<dbReference type="InterPro" id="IPR003135">
    <property type="entry name" value="ATP-grasp_carboxylate-amine"/>
</dbReference>
<dbReference type="InterPro" id="IPR013815">
    <property type="entry name" value="ATP_grasp_subdomain_1"/>
</dbReference>
<dbReference type="InterPro" id="IPR016185">
    <property type="entry name" value="PreATP-grasp_dom_sf"/>
</dbReference>
<dbReference type="InterPro" id="IPR005862">
    <property type="entry name" value="PurT"/>
</dbReference>
<dbReference type="InterPro" id="IPR054350">
    <property type="entry name" value="PurT/PurK_preATP-grasp"/>
</dbReference>
<dbReference type="InterPro" id="IPR048740">
    <property type="entry name" value="PurT_C"/>
</dbReference>
<dbReference type="InterPro" id="IPR011054">
    <property type="entry name" value="Rudment_hybrid_motif"/>
</dbReference>
<dbReference type="NCBIfam" id="NF006766">
    <property type="entry name" value="PRK09288.1"/>
    <property type="match status" value="1"/>
</dbReference>
<dbReference type="NCBIfam" id="TIGR01142">
    <property type="entry name" value="purT"/>
    <property type="match status" value="1"/>
</dbReference>
<dbReference type="PANTHER" id="PTHR43055">
    <property type="entry name" value="FORMATE-DEPENDENT PHOSPHORIBOSYLGLYCINAMIDE FORMYLTRANSFERASE"/>
    <property type="match status" value="1"/>
</dbReference>
<dbReference type="PANTHER" id="PTHR43055:SF1">
    <property type="entry name" value="FORMATE-DEPENDENT PHOSPHORIBOSYLGLYCINAMIDE FORMYLTRANSFERASE"/>
    <property type="match status" value="1"/>
</dbReference>
<dbReference type="Pfam" id="PF02222">
    <property type="entry name" value="ATP-grasp"/>
    <property type="match status" value="1"/>
</dbReference>
<dbReference type="Pfam" id="PF21244">
    <property type="entry name" value="PurT_C"/>
    <property type="match status" value="1"/>
</dbReference>
<dbReference type="Pfam" id="PF22660">
    <property type="entry name" value="RS_preATP-grasp-like"/>
    <property type="match status" value="1"/>
</dbReference>
<dbReference type="SUPFAM" id="SSF56059">
    <property type="entry name" value="Glutathione synthetase ATP-binding domain-like"/>
    <property type="match status" value="1"/>
</dbReference>
<dbReference type="SUPFAM" id="SSF52440">
    <property type="entry name" value="PreATP-grasp domain"/>
    <property type="match status" value="1"/>
</dbReference>
<dbReference type="SUPFAM" id="SSF51246">
    <property type="entry name" value="Rudiment single hybrid motif"/>
    <property type="match status" value="1"/>
</dbReference>
<dbReference type="PROSITE" id="PS50975">
    <property type="entry name" value="ATP_GRASP"/>
    <property type="match status" value="1"/>
</dbReference>
<sequence length="393" mass="42511">MLTIGTALRPGATRVMLLGAGELGKEVAIECQRLGLEVIAVDRYADAPAMHVAHRSHVINMLDGAALKQLVAQEKPHYIVPEIEAIATDMLVELEKMGQHVVPCAEATRLTMNREGIRRLAAETLQLPTSSYRFADTDSAFFQAVRDIGYPCIVKPVMSSSGKGQSLIRSEEHLQAAWEYAQQGGRAGSGRVIIEGLVHFDFEITLLTIRAVDGIHFCAPIGHRQEDGDYRESWQPQAMSDIALQRAKEISAQVVTALGGFGLFGVELFVCGDDVIFSEVSPRPHDTGMVTLISQNMSEFALHVRAFLGLPIGTIRQYGAAASAVILPELTSQNITYRGLETALIGDTQIRLFGKPEIAGKRRLGVALAVADNIETAIEVAKKAAGNIEVSGE</sequence>
<name>PURT_YERPY</name>
<feature type="chain" id="PRO_1000186906" description="Formate-dependent phosphoribosylglycinamide formyltransferase">
    <location>
        <begin position="1"/>
        <end position="393"/>
    </location>
</feature>
<feature type="domain" description="ATP-grasp" evidence="1">
    <location>
        <begin position="119"/>
        <end position="308"/>
    </location>
</feature>
<feature type="binding site" evidence="1">
    <location>
        <begin position="22"/>
        <end position="23"/>
    </location>
    <ligand>
        <name>N(1)-(5-phospho-beta-D-ribosyl)glycinamide</name>
        <dbReference type="ChEBI" id="CHEBI:143788"/>
    </ligand>
</feature>
<feature type="binding site" evidence="1">
    <location>
        <position position="82"/>
    </location>
    <ligand>
        <name>N(1)-(5-phospho-beta-D-ribosyl)glycinamide</name>
        <dbReference type="ChEBI" id="CHEBI:143788"/>
    </ligand>
</feature>
<feature type="binding site" evidence="1">
    <location>
        <position position="114"/>
    </location>
    <ligand>
        <name>ATP</name>
        <dbReference type="ChEBI" id="CHEBI:30616"/>
    </ligand>
</feature>
<feature type="binding site" evidence="1">
    <location>
        <position position="155"/>
    </location>
    <ligand>
        <name>ATP</name>
        <dbReference type="ChEBI" id="CHEBI:30616"/>
    </ligand>
</feature>
<feature type="binding site" evidence="1">
    <location>
        <begin position="160"/>
        <end position="165"/>
    </location>
    <ligand>
        <name>ATP</name>
        <dbReference type="ChEBI" id="CHEBI:30616"/>
    </ligand>
</feature>
<feature type="binding site" evidence="1">
    <location>
        <begin position="195"/>
        <end position="198"/>
    </location>
    <ligand>
        <name>ATP</name>
        <dbReference type="ChEBI" id="CHEBI:30616"/>
    </ligand>
</feature>
<feature type="binding site" evidence="1">
    <location>
        <position position="203"/>
    </location>
    <ligand>
        <name>ATP</name>
        <dbReference type="ChEBI" id="CHEBI:30616"/>
    </ligand>
</feature>
<feature type="binding site" evidence="1">
    <location>
        <position position="267"/>
    </location>
    <ligand>
        <name>Mg(2+)</name>
        <dbReference type="ChEBI" id="CHEBI:18420"/>
    </ligand>
</feature>
<feature type="binding site" evidence="1">
    <location>
        <position position="279"/>
    </location>
    <ligand>
        <name>Mg(2+)</name>
        <dbReference type="ChEBI" id="CHEBI:18420"/>
    </ligand>
</feature>
<feature type="binding site" evidence="1">
    <location>
        <position position="286"/>
    </location>
    <ligand>
        <name>N(1)-(5-phospho-beta-D-ribosyl)glycinamide</name>
        <dbReference type="ChEBI" id="CHEBI:143788"/>
    </ligand>
</feature>
<feature type="binding site" evidence="1">
    <location>
        <position position="355"/>
    </location>
    <ligand>
        <name>N(1)-(5-phospho-beta-D-ribosyl)glycinamide</name>
        <dbReference type="ChEBI" id="CHEBI:143788"/>
    </ligand>
</feature>
<feature type="binding site" evidence="1">
    <location>
        <begin position="362"/>
        <end position="363"/>
    </location>
    <ligand>
        <name>N(1)-(5-phospho-beta-D-ribosyl)glycinamide</name>
        <dbReference type="ChEBI" id="CHEBI:143788"/>
    </ligand>
</feature>
<proteinExistence type="inferred from homology"/>
<protein>
    <recommendedName>
        <fullName evidence="1">Formate-dependent phosphoribosylglycinamide formyltransferase</fullName>
        <ecNumber evidence="1">6.3.1.21</ecNumber>
    </recommendedName>
    <alternativeName>
        <fullName evidence="1">5'-phosphoribosylglycinamide transformylase 2</fullName>
    </alternativeName>
    <alternativeName>
        <fullName evidence="1">Formate-dependent GAR transformylase</fullName>
    </alternativeName>
    <alternativeName>
        <fullName evidence="1">GAR transformylase 2</fullName>
        <shortName evidence="1">GART 2</shortName>
    </alternativeName>
    <alternativeName>
        <fullName evidence="1">Non-folate glycinamide ribonucleotide transformylase</fullName>
    </alternativeName>
    <alternativeName>
        <fullName evidence="1">Phosphoribosylglycinamide formyltransferase 2</fullName>
    </alternativeName>
</protein>
<accession>B1JP38</accession>